<name>PB2_I70A0</name>
<evidence type="ECO:0000255" key="1">
    <source>
        <dbReference type="HAMAP-Rule" id="MF_04062"/>
    </source>
</evidence>
<accession>Q6XTK7</accession>
<reference key="1">
    <citation type="journal article" date="2004" name="Virology">
        <title>Genetic analysis of human H2N2 and early H3N2 influenza viruses, 1957-1972: evidence for genetic divergence and multiple reassortment events.</title>
        <authorList>
            <person name="Lindstrom S.E."/>
            <person name="Cox N.J."/>
            <person name="Klimov A."/>
        </authorList>
    </citation>
    <scope>NUCLEOTIDE SEQUENCE [GENOMIC RNA]</scope>
</reference>
<gene>
    <name evidence="1" type="primary">PB2</name>
</gene>
<sequence length="759" mass="86074">MERIKELRNLMSQSRTREILTKTTVDHMAIIKKYTSGRQEKNPSLRMKWMMAMKYPITADKRITEMVPERNEQGQTLWSKMSDAGSDRVMVSPLAVTWWNRNGPMTSTVHYPKVYKTYFDKVERLKHGTFGPVHFRNQVKIRRRVDINPGHADLSAKEAQDVIMEVVFPNEVGARILTSESQLTITKEKKEELQDCKISPLMVAYMLERELVRKTRFLPVAGGTSSVYIEVLHLTQGTCWEQMYTPGGEVRNDDVDQSLIIAARNIVRRAAVSADPLASLLEMCHSTQIGGTRMVDILRQNPTEEQAVDICKAAMGLRISSSFSFGGFTFKRTSGSSIKREEEVLTGNLQTLKIRVHEGYEEFTMVGKRATAIIRKATRRLVQLIVSGRDEQSIAEAIIVAMVFSQEDCMIKAVRGDLNFVNRANQRLNPMHQLLRHFQKDAKVLFQNWGIEHIDNVMGMIGVLPDMTPSTEMSMRGIRVSKMGVDEYSSTERVVVSIDRFLRVRDQRGNVLLSPEEVSETQGTEKLTITYSSSMMWEINGPESVLVNTYQWIIRNWETVKIQWSQNPTMLYNKMEFEPFQSLVPKAIRGQYSGFVRTLFQQMRDVLGTFDTTQIIKLLPFAAAPPKQSRMQFSSLTVNVRGSGMRILVRGNSPVFNYNKTTKRLTILGKDAGTLIEDPDEGTSGVESAVLRGFLILGKEDRRYGPALSINELSNLAKGEKANVLIGQGDVVLVMKRKRDSSILTDSQTATKRIRMAIN</sequence>
<keyword id="KW-1157">Cap snatching</keyword>
<keyword id="KW-1262">Eukaryotic host gene expression shutoff by virus</keyword>
<keyword id="KW-1191">Eukaryotic host transcription shutoff by virus</keyword>
<keyword id="KW-1190">Host gene expression shutoff by virus</keyword>
<keyword id="KW-1045">Host mitochondrion</keyword>
<keyword id="KW-1048">Host nucleus</keyword>
<keyword id="KW-0945">Host-virus interaction</keyword>
<keyword id="KW-1090">Inhibition of host innate immune response by virus</keyword>
<keyword id="KW-1097">Inhibition of host MAVS by virus</keyword>
<keyword id="KW-1113">Inhibition of host RLR pathway by virus</keyword>
<keyword id="KW-1104">Inhibition of host RNA polymerase II by virus</keyword>
<keyword id="KW-0506">mRNA capping</keyword>
<keyword id="KW-0507">mRNA processing</keyword>
<keyword id="KW-0899">Viral immunoevasion</keyword>
<keyword id="KW-1195">Viral transcription</keyword>
<keyword id="KW-0946">Virion</keyword>
<organism>
    <name type="scientific">Influenza A virus (strain A/Qu/7/1970 H3N2)</name>
    <dbReference type="NCBI Taxonomy" id="221016"/>
    <lineage>
        <taxon>Viruses</taxon>
        <taxon>Riboviria</taxon>
        <taxon>Orthornavirae</taxon>
        <taxon>Negarnaviricota</taxon>
        <taxon>Polyploviricotina</taxon>
        <taxon>Insthoviricetes</taxon>
        <taxon>Articulavirales</taxon>
        <taxon>Orthomyxoviridae</taxon>
        <taxon>Alphainfluenzavirus</taxon>
        <taxon>Alphainfluenzavirus influenzae</taxon>
        <taxon>Influenza A virus</taxon>
    </lineage>
</organism>
<organismHost>
    <name type="scientific">Aves</name>
    <dbReference type="NCBI Taxonomy" id="8782"/>
</organismHost>
<organismHost>
    <name type="scientific">Cetacea</name>
    <name type="common">whales</name>
    <dbReference type="NCBI Taxonomy" id="9721"/>
</organismHost>
<organismHost>
    <name type="scientific">Homo sapiens</name>
    <name type="common">Human</name>
    <dbReference type="NCBI Taxonomy" id="9606"/>
</organismHost>
<organismHost>
    <name type="scientific">Phocidae</name>
    <name type="common">true seals</name>
    <dbReference type="NCBI Taxonomy" id="9709"/>
</organismHost>
<organismHost>
    <name type="scientific">Sus scrofa</name>
    <name type="common">Pig</name>
    <dbReference type="NCBI Taxonomy" id="9823"/>
</organismHost>
<comment type="function">
    <text evidence="1">Plays an essential role in transcription initiation and cap-stealing mechanism, in which cellular capped pre-mRNAs are used to generate primers for viral transcription. Recognizes and binds the 7-methylguanosine-containing cap of the target pre-RNA which is subsequently cleaved after 10-13 nucleotides by the viral protein PA. Plays a role in the initiation of the viral genome replication and modulates the activity of the ribonucleoprotein (RNP) complex. In addition, participates in the inhibition of type I interferon induction through interaction with and inhibition of the host mitochondrial antiviral signaling protein MAVS.</text>
</comment>
<comment type="subunit">
    <text evidence="1">Influenza RNA polymerase is composed of three subunits: PB1, PB2 and PA. Interacts (via N-terminus) with PB1 (via C-terminus). Interacts with nucleoprotein NP (via N-terminus). Interacts (via N-terminus) with host MAVS (via N-terminus); this interaction inhibits host innate immune response.</text>
</comment>
<comment type="subcellular location">
    <subcellularLocation>
        <location evidence="1">Virion</location>
    </subcellularLocation>
    <subcellularLocation>
        <location evidence="1">Host nucleus</location>
    </subcellularLocation>
    <subcellularLocation>
        <location evidence="1">Host mitochondrion</location>
    </subcellularLocation>
</comment>
<comment type="similarity">
    <text evidence="1">Belongs to the influenza viruses PB2 family.</text>
</comment>
<protein>
    <recommendedName>
        <fullName evidence="1">Polymerase basic protein 2</fullName>
    </recommendedName>
    <alternativeName>
        <fullName evidence="1">RNA-directed RNA polymerase subunit P3</fullName>
    </alternativeName>
</protein>
<dbReference type="EMBL" id="AY210145">
    <property type="protein sequence ID" value="AAO46501.1"/>
    <property type="molecule type" value="Genomic_RNA"/>
</dbReference>
<dbReference type="SMR" id="Q6XTK7"/>
<dbReference type="GO" id="GO:0033650">
    <property type="term" value="C:host cell mitochondrion"/>
    <property type="evidence" value="ECO:0007669"/>
    <property type="project" value="UniProtKB-SubCell"/>
</dbReference>
<dbReference type="GO" id="GO:0042025">
    <property type="term" value="C:host cell nucleus"/>
    <property type="evidence" value="ECO:0007669"/>
    <property type="project" value="UniProtKB-SubCell"/>
</dbReference>
<dbReference type="GO" id="GO:0044423">
    <property type="term" value="C:virion component"/>
    <property type="evidence" value="ECO:0007669"/>
    <property type="project" value="UniProtKB-UniRule"/>
</dbReference>
<dbReference type="GO" id="GO:0003723">
    <property type="term" value="F:RNA binding"/>
    <property type="evidence" value="ECO:0007669"/>
    <property type="project" value="UniProtKB-UniRule"/>
</dbReference>
<dbReference type="GO" id="GO:0003968">
    <property type="term" value="F:RNA-directed RNA polymerase activity"/>
    <property type="evidence" value="ECO:0007669"/>
    <property type="project" value="UniProtKB-UniRule"/>
</dbReference>
<dbReference type="GO" id="GO:0006370">
    <property type="term" value="P:7-methylguanosine mRNA capping"/>
    <property type="evidence" value="ECO:0007669"/>
    <property type="project" value="UniProtKB-UniRule"/>
</dbReference>
<dbReference type="GO" id="GO:0075526">
    <property type="term" value="P:cap snatching"/>
    <property type="evidence" value="ECO:0007669"/>
    <property type="project" value="UniProtKB-UniRule"/>
</dbReference>
<dbReference type="GO" id="GO:0006351">
    <property type="term" value="P:DNA-templated transcription"/>
    <property type="evidence" value="ECO:0007669"/>
    <property type="project" value="UniProtKB-UniRule"/>
</dbReference>
<dbReference type="GO" id="GO:0039545">
    <property type="term" value="P:symbiont-mediated suppression of host cytoplasmic pattern recognition receptor signaling pathway via inhibition of MAVS activity"/>
    <property type="evidence" value="ECO:0007669"/>
    <property type="project" value="UniProtKB-UniRule"/>
</dbReference>
<dbReference type="GO" id="GO:0039657">
    <property type="term" value="P:symbiont-mediated suppression of host gene expression"/>
    <property type="evidence" value="ECO:0007669"/>
    <property type="project" value="UniProtKB-KW"/>
</dbReference>
<dbReference type="GO" id="GO:0039523">
    <property type="term" value="P:symbiont-mediated suppression of host mRNA transcription via inhibition of RNA polymerase II activity"/>
    <property type="evidence" value="ECO:0007669"/>
    <property type="project" value="UniProtKB-UniRule"/>
</dbReference>
<dbReference type="GO" id="GO:0039694">
    <property type="term" value="P:viral RNA genome replication"/>
    <property type="evidence" value="ECO:0007669"/>
    <property type="project" value="InterPro"/>
</dbReference>
<dbReference type="FunFam" id="3.30.30.90:FF:000001">
    <property type="entry name" value="Polymerase basic protein 2"/>
    <property type="match status" value="1"/>
</dbReference>
<dbReference type="Gene3D" id="3.30.30.90">
    <property type="entry name" value="Polymerase Basic Protein 2, C-terminal domain"/>
    <property type="match status" value="1"/>
</dbReference>
<dbReference type="HAMAP" id="MF_04062">
    <property type="entry name" value="INV_PB2"/>
    <property type="match status" value="1"/>
</dbReference>
<dbReference type="InterPro" id="IPR049110">
    <property type="entry name" value="Flu_PB2_2nd"/>
</dbReference>
<dbReference type="InterPro" id="IPR049114">
    <property type="entry name" value="Flu_PB2_6th"/>
</dbReference>
<dbReference type="InterPro" id="IPR049115">
    <property type="entry name" value="Flu_PB2_C"/>
</dbReference>
<dbReference type="InterPro" id="IPR048298">
    <property type="entry name" value="Flu_PB2_CAP-bd"/>
</dbReference>
<dbReference type="InterPro" id="IPR049111">
    <property type="entry name" value="Flu_PB2_middle"/>
</dbReference>
<dbReference type="InterPro" id="IPR049106">
    <property type="entry name" value="Flu_PB2_N"/>
</dbReference>
<dbReference type="InterPro" id="IPR001591">
    <property type="entry name" value="INV_PB2"/>
</dbReference>
<dbReference type="InterPro" id="IPR049113">
    <property type="entry name" value="PB2_helical"/>
</dbReference>
<dbReference type="InterPro" id="IPR037258">
    <property type="entry name" value="PDB2_C"/>
</dbReference>
<dbReference type="Pfam" id="PF20947">
    <property type="entry name" value="Flu_PB2_1st"/>
    <property type="match status" value="1"/>
</dbReference>
<dbReference type="Pfam" id="PF20948">
    <property type="entry name" value="Flu_PB2_2nd"/>
    <property type="match status" value="1"/>
</dbReference>
<dbReference type="Pfam" id="PF20949">
    <property type="entry name" value="Flu_PB2_3rd"/>
    <property type="match status" value="1"/>
</dbReference>
<dbReference type="Pfam" id="PF20950">
    <property type="entry name" value="Flu_PB2_4th"/>
    <property type="match status" value="1"/>
</dbReference>
<dbReference type="Pfam" id="PF00604">
    <property type="entry name" value="Flu_PB2_5th"/>
    <property type="match status" value="1"/>
</dbReference>
<dbReference type="Pfam" id="PF20951">
    <property type="entry name" value="Flu_PB2_6th"/>
    <property type="match status" value="1"/>
</dbReference>
<dbReference type="Pfam" id="PF20952">
    <property type="entry name" value="Flu_PB2_7th"/>
    <property type="match status" value="1"/>
</dbReference>
<dbReference type="SUPFAM" id="SSF160453">
    <property type="entry name" value="PB2 C-terminal domain-like"/>
    <property type="match status" value="1"/>
</dbReference>
<proteinExistence type="inferred from homology"/>
<feature type="chain" id="PRO_0000279645" description="Polymerase basic protein 2">
    <location>
        <begin position="1"/>
        <end position="759"/>
    </location>
</feature>
<feature type="short sequence motif" description="Nuclear localization signal" evidence="1">
    <location>
        <begin position="736"/>
        <end position="739"/>
    </location>
</feature>
<feature type="site" description="Mammalian adaptation" evidence="1">
    <location>
        <position position="627"/>
    </location>
</feature>